<reference key="1">
    <citation type="journal article" date="2009" name="J. Bacteriol.">
        <title>Complete genome sequence and comparative genome analysis of enteropathogenic Escherichia coli O127:H6 strain E2348/69.</title>
        <authorList>
            <person name="Iguchi A."/>
            <person name="Thomson N.R."/>
            <person name="Ogura Y."/>
            <person name="Saunders D."/>
            <person name="Ooka T."/>
            <person name="Henderson I.R."/>
            <person name="Harris D."/>
            <person name="Asadulghani M."/>
            <person name="Kurokawa K."/>
            <person name="Dean P."/>
            <person name="Kenny B."/>
            <person name="Quail M.A."/>
            <person name="Thurston S."/>
            <person name="Dougan G."/>
            <person name="Hayashi T."/>
            <person name="Parkhill J."/>
            <person name="Frankel G."/>
        </authorList>
    </citation>
    <scope>NUCLEOTIDE SEQUENCE [LARGE SCALE GENOMIC DNA]</scope>
    <source>
        <strain>E2348/69 / EPEC</strain>
    </source>
</reference>
<feature type="chain" id="PRO_1000191993" description="Aspartate 1-decarboxylase beta chain" evidence="1">
    <location>
        <begin position="1"/>
        <end position="24"/>
    </location>
</feature>
<feature type="chain" id="PRO_1000191994" description="Aspartate 1-decarboxylase alpha chain" evidence="1">
    <location>
        <begin position="25"/>
        <end position="126"/>
    </location>
</feature>
<feature type="active site" description="Schiff-base intermediate with substrate; via pyruvic acid" evidence="1">
    <location>
        <position position="25"/>
    </location>
</feature>
<feature type="active site" description="Proton donor" evidence="1">
    <location>
        <position position="58"/>
    </location>
</feature>
<feature type="binding site" evidence="1">
    <location>
        <position position="57"/>
    </location>
    <ligand>
        <name>substrate</name>
    </ligand>
</feature>
<feature type="binding site" evidence="1">
    <location>
        <begin position="73"/>
        <end position="75"/>
    </location>
    <ligand>
        <name>substrate</name>
    </ligand>
</feature>
<feature type="modified residue" description="Pyruvic acid (Ser)" evidence="1">
    <location>
        <position position="25"/>
    </location>
</feature>
<proteinExistence type="inferred from homology"/>
<organism>
    <name type="scientific">Escherichia coli O127:H6 (strain E2348/69 / EPEC)</name>
    <dbReference type="NCBI Taxonomy" id="574521"/>
    <lineage>
        <taxon>Bacteria</taxon>
        <taxon>Pseudomonadati</taxon>
        <taxon>Pseudomonadota</taxon>
        <taxon>Gammaproteobacteria</taxon>
        <taxon>Enterobacterales</taxon>
        <taxon>Enterobacteriaceae</taxon>
        <taxon>Escherichia</taxon>
    </lineage>
</organism>
<evidence type="ECO:0000255" key="1">
    <source>
        <dbReference type="HAMAP-Rule" id="MF_00446"/>
    </source>
</evidence>
<accession>B7UIH9</accession>
<keyword id="KW-0068">Autocatalytic cleavage</keyword>
<keyword id="KW-0963">Cytoplasm</keyword>
<keyword id="KW-0210">Decarboxylase</keyword>
<keyword id="KW-0456">Lyase</keyword>
<keyword id="KW-0566">Pantothenate biosynthesis</keyword>
<keyword id="KW-0670">Pyruvate</keyword>
<keyword id="KW-1185">Reference proteome</keyword>
<keyword id="KW-0704">Schiff base</keyword>
<keyword id="KW-0865">Zymogen</keyword>
<sequence>MIRTMLQGKLHRVKVTHADLHYEGSCAIDQDFLDAAGILENEAIDIWNVTNGKRFSTYAIAAERGSRIISVNGAAAHCASVGDIVIIASFVTMPDEEARTWRPNVAYFEGDNEMKRTAKAIPVQVA</sequence>
<gene>
    <name evidence="1" type="primary">panD</name>
    <name type="ordered locus">E2348C_0134</name>
</gene>
<comment type="function">
    <text evidence="1">Catalyzes the pyruvoyl-dependent decarboxylation of aspartate to produce beta-alanine.</text>
</comment>
<comment type="catalytic activity">
    <reaction evidence="1">
        <text>L-aspartate + H(+) = beta-alanine + CO2</text>
        <dbReference type="Rhea" id="RHEA:19497"/>
        <dbReference type="ChEBI" id="CHEBI:15378"/>
        <dbReference type="ChEBI" id="CHEBI:16526"/>
        <dbReference type="ChEBI" id="CHEBI:29991"/>
        <dbReference type="ChEBI" id="CHEBI:57966"/>
        <dbReference type="EC" id="4.1.1.11"/>
    </reaction>
</comment>
<comment type="cofactor">
    <cofactor evidence="1">
        <name>pyruvate</name>
        <dbReference type="ChEBI" id="CHEBI:15361"/>
    </cofactor>
    <text evidence="1">Binds 1 pyruvoyl group covalently per subunit.</text>
</comment>
<comment type="pathway">
    <text evidence="1">Cofactor biosynthesis; (R)-pantothenate biosynthesis; beta-alanine from L-aspartate: step 1/1.</text>
</comment>
<comment type="subunit">
    <text evidence="1">Heterooctamer of four alpha and four beta subunits.</text>
</comment>
<comment type="subcellular location">
    <subcellularLocation>
        <location evidence="1">Cytoplasm</location>
    </subcellularLocation>
</comment>
<comment type="PTM">
    <text evidence="1">Is synthesized initially as an inactive proenzyme, which is activated by self-cleavage at a specific serine bond to produce a beta-subunit with a hydroxyl group at its C-terminus and an alpha-subunit with a pyruvoyl group at its N-terminus.</text>
</comment>
<comment type="similarity">
    <text evidence="1">Belongs to the PanD family.</text>
</comment>
<name>PAND_ECO27</name>
<dbReference type="EC" id="4.1.1.11" evidence="1"/>
<dbReference type="EMBL" id="FM180568">
    <property type="protein sequence ID" value="CAS07682.1"/>
    <property type="molecule type" value="Genomic_DNA"/>
</dbReference>
<dbReference type="RefSeq" id="WP_000621515.1">
    <property type="nucleotide sequence ID" value="NC_011601.1"/>
</dbReference>
<dbReference type="SMR" id="B7UIH9"/>
<dbReference type="GeneID" id="93777305"/>
<dbReference type="KEGG" id="ecg:E2348C_0134"/>
<dbReference type="HOGENOM" id="CLU_115305_2_1_6"/>
<dbReference type="UniPathway" id="UPA00028">
    <property type="reaction ID" value="UER00002"/>
</dbReference>
<dbReference type="Proteomes" id="UP000008205">
    <property type="component" value="Chromosome"/>
</dbReference>
<dbReference type="GO" id="GO:0005829">
    <property type="term" value="C:cytosol"/>
    <property type="evidence" value="ECO:0007669"/>
    <property type="project" value="TreeGrafter"/>
</dbReference>
<dbReference type="GO" id="GO:0004068">
    <property type="term" value="F:aspartate 1-decarboxylase activity"/>
    <property type="evidence" value="ECO:0007669"/>
    <property type="project" value="UniProtKB-UniRule"/>
</dbReference>
<dbReference type="GO" id="GO:0006523">
    <property type="term" value="P:alanine biosynthetic process"/>
    <property type="evidence" value="ECO:0007669"/>
    <property type="project" value="InterPro"/>
</dbReference>
<dbReference type="GO" id="GO:0015940">
    <property type="term" value="P:pantothenate biosynthetic process"/>
    <property type="evidence" value="ECO:0007669"/>
    <property type="project" value="UniProtKB-UniRule"/>
</dbReference>
<dbReference type="CDD" id="cd06919">
    <property type="entry name" value="Asp_decarbox"/>
    <property type="match status" value="1"/>
</dbReference>
<dbReference type="FunFam" id="2.40.40.20:FF:000004">
    <property type="entry name" value="Aspartate 1-decarboxylase"/>
    <property type="match status" value="1"/>
</dbReference>
<dbReference type="Gene3D" id="2.40.40.20">
    <property type="match status" value="1"/>
</dbReference>
<dbReference type="HAMAP" id="MF_00446">
    <property type="entry name" value="PanD"/>
    <property type="match status" value="1"/>
</dbReference>
<dbReference type="InterPro" id="IPR009010">
    <property type="entry name" value="Asp_de-COase-like_dom_sf"/>
</dbReference>
<dbReference type="InterPro" id="IPR003190">
    <property type="entry name" value="Asp_decarbox"/>
</dbReference>
<dbReference type="NCBIfam" id="TIGR00223">
    <property type="entry name" value="panD"/>
    <property type="match status" value="1"/>
</dbReference>
<dbReference type="PANTHER" id="PTHR21012">
    <property type="entry name" value="ASPARTATE 1-DECARBOXYLASE"/>
    <property type="match status" value="1"/>
</dbReference>
<dbReference type="PANTHER" id="PTHR21012:SF0">
    <property type="entry name" value="ASPARTATE 1-DECARBOXYLASE"/>
    <property type="match status" value="1"/>
</dbReference>
<dbReference type="Pfam" id="PF02261">
    <property type="entry name" value="Asp_decarbox"/>
    <property type="match status" value="1"/>
</dbReference>
<dbReference type="PIRSF" id="PIRSF006246">
    <property type="entry name" value="Asp_decarbox"/>
    <property type="match status" value="1"/>
</dbReference>
<dbReference type="SUPFAM" id="SSF50692">
    <property type="entry name" value="ADC-like"/>
    <property type="match status" value="1"/>
</dbReference>
<protein>
    <recommendedName>
        <fullName evidence="1">Aspartate 1-decarboxylase</fullName>
        <ecNumber evidence="1">4.1.1.11</ecNumber>
    </recommendedName>
    <alternativeName>
        <fullName evidence="1">Aspartate alpha-decarboxylase</fullName>
    </alternativeName>
    <component>
        <recommendedName>
            <fullName evidence="1">Aspartate 1-decarboxylase beta chain</fullName>
        </recommendedName>
    </component>
    <component>
        <recommendedName>
            <fullName evidence="1">Aspartate 1-decarboxylase alpha chain</fullName>
        </recommendedName>
    </component>
</protein>